<proteinExistence type="inferred from homology"/>
<reference key="1">
    <citation type="journal article" date="2003" name="Lancet">
        <title>Genome sequence of Vibrio parahaemolyticus: a pathogenic mechanism distinct from that of V. cholerae.</title>
        <authorList>
            <person name="Makino K."/>
            <person name="Oshima K."/>
            <person name="Kurokawa K."/>
            <person name="Yokoyama K."/>
            <person name="Uda T."/>
            <person name="Tagomori K."/>
            <person name="Iijima Y."/>
            <person name="Najima M."/>
            <person name="Nakano M."/>
            <person name="Yamashita A."/>
            <person name="Kubota Y."/>
            <person name="Kimura S."/>
            <person name="Yasunaga T."/>
            <person name="Honda T."/>
            <person name="Shinagawa H."/>
            <person name="Hattori M."/>
            <person name="Iida T."/>
        </authorList>
    </citation>
    <scope>NUCLEOTIDE SEQUENCE [LARGE SCALE GENOMIC DNA]</scope>
    <source>
        <strain>RIMD 2210633</strain>
    </source>
</reference>
<comment type="function">
    <text evidence="1">Promotes RNA polymerase assembly. Latches the N- and C-terminal regions of the beta' subunit thereby facilitating its interaction with the beta and alpha subunits.</text>
</comment>
<comment type="catalytic activity">
    <reaction evidence="1">
        <text>RNA(n) + a ribonucleoside 5'-triphosphate = RNA(n+1) + diphosphate</text>
        <dbReference type="Rhea" id="RHEA:21248"/>
        <dbReference type="Rhea" id="RHEA-COMP:14527"/>
        <dbReference type="Rhea" id="RHEA-COMP:17342"/>
        <dbReference type="ChEBI" id="CHEBI:33019"/>
        <dbReference type="ChEBI" id="CHEBI:61557"/>
        <dbReference type="ChEBI" id="CHEBI:140395"/>
        <dbReference type="EC" id="2.7.7.6"/>
    </reaction>
</comment>
<comment type="subunit">
    <text evidence="1">The RNAP catalytic core consists of 2 alpha, 1 beta, 1 beta' and 1 omega subunit. When a sigma factor is associated with the core the holoenzyme is formed, which can initiate transcription.</text>
</comment>
<comment type="similarity">
    <text evidence="1">Belongs to the RNA polymerase subunit omega family.</text>
</comment>
<feature type="chain" id="PRO_0000129010" description="DNA-directed RNA polymerase subunit omega">
    <location>
        <begin position="1"/>
        <end position="90"/>
    </location>
</feature>
<feature type="region of interest" description="Disordered" evidence="2">
    <location>
        <begin position="69"/>
        <end position="90"/>
    </location>
</feature>
<gene>
    <name evidence="1" type="primary">rpoZ</name>
    <name type="ordered locus">VP0160</name>
</gene>
<keyword id="KW-0240">DNA-directed RNA polymerase</keyword>
<keyword id="KW-0548">Nucleotidyltransferase</keyword>
<keyword id="KW-0804">Transcription</keyword>
<keyword id="KW-0808">Transferase</keyword>
<evidence type="ECO:0000255" key="1">
    <source>
        <dbReference type="HAMAP-Rule" id="MF_00366"/>
    </source>
</evidence>
<evidence type="ECO:0000256" key="2">
    <source>
        <dbReference type="SAM" id="MobiDB-lite"/>
    </source>
</evidence>
<dbReference type="EC" id="2.7.7.6" evidence="1"/>
<dbReference type="EMBL" id="BA000031">
    <property type="protein sequence ID" value="BAC58423.1"/>
    <property type="molecule type" value="Genomic_DNA"/>
</dbReference>
<dbReference type="RefSeq" id="NP_796539.1">
    <property type="nucleotide sequence ID" value="NC_004603.1"/>
</dbReference>
<dbReference type="RefSeq" id="WP_005379346.1">
    <property type="nucleotide sequence ID" value="NC_004603.1"/>
</dbReference>
<dbReference type="SMR" id="Q87TB0"/>
<dbReference type="GeneID" id="83583212"/>
<dbReference type="KEGG" id="vpa:VP0160"/>
<dbReference type="PATRIC" id="fig|223926.6.peg.153"/>
<dbReference type="eggNOG" id="COG1758">
    <property type="taxonomic scope" value="Bacteria"/>
</dbReference>
<dbReference type="HOGENOM" id="CLU_125406_5_3_6"/>
<dbReference type="Proteomes" id="UP000002493">
    <property type="component" value="Chromosome 1"/>
</dbReference>
<dbReference type="GO" id="GO:0000428">
    <property type="term" value="C:DNA-directed RNA polymerase complex"/>
    <property type="evidence" value="ECO:0007669"/>
    <property type="project" value="UniProtKB-KW"/>
</dbReference>
<dbReference type="GO" id="GO:0003677">
    <property type="term" value="F:DNA binding"/>
    <property type="evidence" value="ECO:0007669"/>
    <property type="project" value="UniProtKB-UniRule"/>
</dbReference>
<dbReference type="GO" id="GO:0003899">
    <property type="term" value="F:DNA-directed RNA polymerase activity"/>
    <property type="evidence" value="ECO:0007669"/>
    <property type="project" value="UniProtKB-UniRule"/>
</dbReference>
<dbReference type="GO" id="GO:0006351">
    <property type="term" value="P:DNA-templated transcription"/>
    <property type="evidence" value="ECO:0007669"/>
    <property type="project" value="UniProtKB-UniRule"/>
</dbReference>
<dbReference type="FunFam" id="3.90.940.10:FF:000001">
    <property type="entry name" value="DNA-directed RNA polymerase subunit omega"/>
    <property type="match status" value="1"/>
</dbReference>
<dbReference type="Gene3D" id="3.90.940.10">
    <property type="match status" value="1"/>
</dbReference>
<dbReference type="HAMAP" id="MF_00366">
    <property type="entry name" value="RNApol_bact_RpoZ"/>
    <property type="match status" value="1"/>
</dbReference>
<dbReference type="InterPro" id="IPR003716">
    <property type="entry name" value="DNA-dir_RNA_pol_omega"/>
</dbReference>
<dbReference type="InterPro" id="IPR006110">
    <property type="entry name" value="Pol_omega/Rpo6/RPB6"/>
</dbReference>
<dbReference type="InterPro" id="IPR036161">
    <property type="entry name" value="RPB6/omega-like_sf"/>
</dbReference>
<dbReference type="NCBIfam" id="TIGR00690">
    <property type="entry name" value="rpoZ"/>
    <property type="match status" value="1"/>
</dbReference>
<dbReference type="PANTHER" id="PTHR34476">
    <property type="entry name" value="DNA-DIRECTED RNA POLYMERASE SUBUNIT OMEGA"/>
    <property type="match status" value="1"/>
</dbReference>
<dbReference type="PANTHER" id="PTHR34476:SF1">
    <property type="entry name" value="DNA-DIRECTED RNA POLYMERASE SUBUNIT OMEGA"/>
    <property type="match status" value="1"/>
</dbReference>
<dbReference type="Pfam" id="PF01192">
    <property type="entry name" value="RNA_pol_Rpb6"/>
    <property type="match status" value="1"/>
</dbReference>
<dbReference type="SMART" id="SM01409">
    <property type="entry name" value="RNA_pol_Rpb6"/>
    <property type="match status" value="1"/>
</dbReference>
<dbReference type="SUPFAM" id="SSF63562">
    <property type="entry name" value="RPB6/omega subunit-like"/>
    <property type="match status" value="1"/>
</dbReference>
<protein>
    <recommendedName>
        <fullName evidence="1">DNA-directed RNA polymerase subunit omega</fullName>
        <shortName evidence="1">RNAP omega subunit</shortName>
        <ecNumber evidence="1">2.7.7.6</ecNumber>
    </recommendedName>
    <alternativeName>
        <fullName evidence="1">RNA polymerase omega subunit</fullName>
    </alternativeName>
    <alternativeName>
        <fullName evidence="1">Transcriptase subunit omega</fullName>
    </alternativeName>
</protein>
<accession>Q87TB0</accession>
<sequence>MARVTVQDAVEKVGNRFDLVLIAARRARQMQTGGKDALVPEENDKPTVIALREIEEGLITKEVLDARERQEQQEQEAAELAAVSSIAHNR</sequence>
<name>RPOZ_VIBPA</name>
<organism>
    <name type="scientific">Vibrio parahaemolyticus serotype O3:K6 (strain RIMD 2210633)</name>
    <dbReference type="NCBI Taxonomy" id="223926"/>
    <lineage>
        <taxon>Bacteria</taxon>
        <taxon>Pseudomonadati</taxon>
        <taxon>Pseudomonadota</taxon>
        <taxon>Gammaproteobacteria</taxon>
        <taxon>Vibrionales</taxon>
        <taxon>Vibrionaceae</taxon>
        <taxon>Vibrio</taxon>
    </lineage>
</organism>